<reference key="1">
    <citation type="journal article" date="2008" name="PLoS ONE">
        <title>Genome biology of Actinobacillus pleuropneumoniae JL03, an isolate of serotype 3 prevalent in China.</title>
        <authorList>
            <person name="Xu Z."/>
            <person name="Zhou Y."/>
            <person name="Li L."/>
            <person name="Zhou R."/>
            <person name="Xiao S."/>
            <person name="Wan Y."/>
            <person name="Zhang S."/>
            <person name="Wang K."/>
            <person name="Li W."/>
            <person name="Li L."/>
            <person name="Jin H."/>
            <person name="Kang M."/>
            <person name="Dalai B."/>
            <person name="Li T."/>
            <person name="Liu L."/>
            <person name="Cheng Y."/>
            <person name="Zhang L."/>
            <person name="Xu T."/>
            <person name="Zheng H."/>
            <person name="Pu S."/>
            <person name="Wang B."/>
            <person name="Gu W."/>
            <person name="Zhang X.L."/>
            <person name="Zhu G.-F."/>
            <person name="Wang S."/>
            <person name="Zhao G.-P."/>
            <person name="Chen H."/>
        </authorList>
    </citation>
    <scope>NUCLEOTIDE SEQUENCE [LARGE SCALE GENOMIC DNA]</scope>
    <source>
        <strain>JL03</strain>
    </source>
</reference>
<comment type="catalytic activity">
    <reaction evidence="1">
        <text>urea + 2 H2O + H(+) = hydrogencarbonate + 2 NH4(+)</text>
        <dbReference type="Rhea" id="RHEA:20557"/>
        <dbReference type="ChEBI" id="CHEBI:15377"/>
        <dbReference type="ChEBI" id="CHEBI:15378"/>
        <dbReference type="ChEBI" id="CHEBI:16199"/>
        <dbReference type="ChEBI" id="CHEBI:17544"/>
        <dbReference type="ChEBI" id="CHEBI:28938"/>
        <dbReference type="EC" id="3.5.1.5"/>
    </reaction>
</comment>
<comment type="cofactor">
    <cofactor evidence="1">
        <name>Ni cation</name>
        <dbReference type="ChEBI" id="CHEBI:25516"/>
    </cofactor>
    <text evidence="1">Binds 2 nickel ions per subunit.</text>
</comment>
<comment type="pathway">
    <text evidence="1">Nitrogen metabolism; urea degradation; CO(2) and NH(3) from urea (urease route): step 1/1.</text>
</comment>
<comment type="subunit">
    <text evidence="1">Heterotrimer of UreA (gamma), UreB (beta) and UreC (alpha) subunits. Three heterotrimers associate to form the active enzyme.</text>
</comment>
<comment type="subcellular location">
    <subcellularLocation>
        <location evidence="1">Cytoplasm</location>
    </subcellularLocation>
</comment>
<comment type="PTM">
    <text evidence="1">Carboxylation allows a single lysine to coordinate two nickel ions.</text>
</comment>
<comment type="similarity">
    <text evidence="1">Belongs to the metallo-dependent hydrolases superfamily. Urease alpha subunit family.</text>
</comment>
<feature type="chain" id="PRO_1000188856" description="Urease subunit alpha">
    <location>
        <begin position="1"/>
        <end position="572"/>
    </location>
</feature>
<feature type="domain" description="Urease" evidence="1">
    <location>
        <begin position="136"/>
        <end position="572"/>
    </location>
</feature>
<feature type="active site" description="Proton donor" evidence="1">
    <location>
        <position position="327"/>
    </location>
</feature>
<feature type="binding site" evidence="1">
    <location>
        <position position="141"/>
    </location>
    <ligand>
        <name>Ni(2+)</name>
        <dbReference type="ChEBI" id="CHEBI:49786"/>
        <label>1</label>
    </ligand>
</feature>
<feature type="binding site" evidence="1">
    <location>
        <position position="143"/>
    </location>
    <ligand>
        <name>Ni(2+)</name>
        <dbReference type="ChEBI" id="CHEBI:49786"/>
        <label>1</label>
    </ligand>
</feature>
<feature type="binding site" description="via carbamate group" evidence="1">
    <location>
        <position position="224"/>
    </location>
    <ligand>
        <name>Ni(2+)</name>
        <dbReference type="ChEBI" id="CHEBI:49786"/>
        <label>1</label>
    </ligand>
</feature>
<feature type="binding site" description="via carbamate group" evidence="1">
    <location>
        <position position="224"/>
    </location>
    <ligand>
        <name>Ni(2+)</name>
        <dbReference type="ChEBI" id="CHEBI:49786"/>
        <label>2</label>
    </ligand>
</feature>
<feature type="binding site" evidence="1">
    <location>
        <position position="226"/>
    </location>
    <ligand>
        <name>substrate</name>
    </ligand>
</feature>
<feature type="binding site" evidence="1">
    <location>
        <position position="253"/>
    </location>
    <ligand>
        <name>Ni(2+)</name>
        <dbReference type="ChEBI" id="CHEBI:49786"/>
        <label>2</label>
    </ligand>
</feature>
<feature type="binding site" evidence="1">
    <location>
        <position position="279"/>
    </location>
    <ligand>
        <name>Ni(2+)</name>
        <dbReference type="ChEBI" id="CHEBI:49786"/>
        <label>2</label>
    </ligand>
</feature>
<feature type="binding site" evidence="1">
    <location>
        <position position="367"/>
    </location>
    <ligand>
        <name>Ni(2+)</name>
        <dbReference type="ChEBI" id="CHEBI:49786"/>
        <label>1</label>
    </ligand>
</feature>
<feature type="modified residue" description="N6-carboxylysine" evidence="1">
    <location>
        <position position="224"/>
    </location>
</feature>
<name>URE1_ACTPJ</name>
<dbReference type="EC" id="3.5.1.5" evidence="1"/>
<dbReference type="EMBL" id="CP000687">
    <property type="protein sequence ID" value="ABY70201.1"/>
    <property type="molecule type" value="Genomic_DNA"/>
</dbReference>
<dbReference type="RefSeq" id="WP_012263317.1">
    <property type="nucleotide sequence ID" value="NC_010278.1"/>
</dbReference>
<dbReference type="SMR" id="B0BRU2"/>
<dbReference type="MEROPS" id="M38.982"/>
<dbReference type="KEGG" id="apj:APJL_1649"/>
<dbReference type="HOGENOM" id="CLU_000980_0_0_6"/>
<dbReference type="UniPathway" id="UPA00258">
    <property type="reaction ID" value="UER00370"/>
</dbReference>
<dbReference type="Proteomes" id="UP000008547">
    <property type="component" value="Chromosome"/>
</dbReference>
<dbReference type="GO" id="GO:0005737">
    <property type="term" value="C:cytoplasm"/>
    <property type="evidence" value="ECO:0007669"/>
    <property type="project" value="UniProtKB-SubCell"/>
</dbReference>
<dbReference type="GO" id="GO:0016151">
    <property type="term" value="F:nickel cation binding"/>
    <property type="evidence" value="ECO:0007669"/>
    <property type="project" value="UniProtKB-UniRule"/>
</dbReference>
<dbReference type="GO" id="GO:0009039">
    <property type="term" value="F:urease activity"/>
    <property type="evidence" value="ECO:0007669"/>
    <property type="project" value="UniProtKB-UniRule"/>
</dbReference>
<dbReference type="GO" id="GO:0043419">
    <property type="term" value="P:urea catabolic process"/>
    <property type="evidence" value="ECO:0007669"/>
    <property type="project" value="UniProtKB-UniRule"/>
</dbReference>
<dbReference type="CDD" id="cd00375">
    <property type="entry name" value="Urease_alpha"/>
    <property type="match status" value="1"/>
</dbReference>
<dbReference type="Gene3D" id="3.20.20.140">
    <property type="entry name" value="Metal-dependent hydrolases"/>
    <property type="match status" value="1"/>
</dbReference>
<dbReference type="Gene3D" id="2.30.40.10">
    <property type="entry name" value="Urease, subunit C, domain 1"/>
    <property type="match status" value="1"/>
</dbReference>
<dbReference type="HAMAP" id="MF_01953">
    <property type="entry name" value="Urease_alpha"/>
    <property type="match status" value="1"/>
</dbReference>
<dbReference type="InterPro" id="IPR006680">
    <property type="entry name" value="Amidohydro-rel"/>
</dbReference>
<dbReference type="InterPro" id="IPR011059">
    <property type="entry name" value="Metal-dep_hydrolase_composite"/>
</dbReference>
<dbReference type="InterPro" id="IPR032466">
    <property type="entry name" value="Metal_Hydrolase"/>
</dbReference>
<dbReference type="InterPro" id="IPR011612">
    <property type="entry name" value="Urease_alpha_N_dom"/>
</dbReference>
<dbReference type="InterPro" id="IPR050112">
    <property type="entry name" value="Urease_alpha_subunit"/>
</dbReference>
<dbReference type="InterPro" id="IPR017950">
    <property type="entry name" value="Urease_AS"/>
</dbReference>
<dbReference type="InterPro" id="IPR005848">
    <property type="entry name" value="Urease_asu"/>
</dbReference>
<dbReference type="InterPro" id="IPR017951">
    <property type="entry name" value="Urease_asu_c"/>
</dbReference>
<dbReference type="InterPro" id="IPR029754">
    <property type="entry name" value="Urease_Ni-bd"/>
</dbReference>
<dbReference type="NCBIfam" id="NF009686">
    <property type="entry name" value="PRK13207.1"/>
    <property type="match status" value="1"/>
</dbReference>
<dbReference type="NCBIfam" id="TIGR01792">
    <property type="entry name" value="urease_alph"/>
    <property type="match status" value="1"/>
</dbReference>
<dbReference type="PANTHER" id="PTHR43440">
    <property type="entry name" value="UREASE"/>
    <property type="match status" value="1"/>
</dbReference>
<dbReference type="PANTHER" id="PTHR43440:SF1">
    <property type="entry name" value="UREASE"/>
    <property type="match status" value="1"/>
</dbReference>
<dbReference type="Pfam" id="PF01979">
    <property type="entry name" value="Amidohydro_1"/>
    <property type="match status" value="1"/>
</dbReference>
<dbReference type="Pfam" id="PF00449">
    <property type="entry name" value="Urease_alpha"/>
    <property type="match status" value="1"/>
</dbReference>
<dbReference type="PRINTS" id="PR01752">
    <property type="entry name" value="UREASE"/>
</dbReference>
<dbReference type="SUPFAM" id="SSF51338">
    <property type="entry name" value="Composite domain of metallo-dependent hydrolases"/>
    <property type="match status" value="2"/>
</dbReference>
<dbReference type="SUPFAM" id="SSF51556">
    <property type="entry name" value="Metallo-dependent hydrolases"/>
    <property type="match status" value="1"/>
</dbReference>
<dbReference type="PROSITE" id="PS01120">
    <property type="entry name" value="UREASE_1"/>
    <property type="match status" value="1"/>
</dbReference>
<dbReference type="PROSITE" id="PS00145">
    <property type="entry name" value="UREASE_2"/>
    <property type="match status" value="1"/>
</dbReference>
<dbReference type="PROSITE" id="PS51368">
    <property type="entry name" value="UREASE_3"/>
    <property type="match status" value="1"/>
</dbReference>
<sequence>MALIIPRSQYVATYGPTVGDKVRLGDTDLWATIEQDFLTKGDECKFGGGKSVRDGMAQSSTATRDNPNVLDFALTNVMIIDAKLGIIKADIGIRDGRIVGIGQAGNPDTMDNVTPNMIIGASTEVHNGAHLIATAGGIDTHIHWICPQQAQHAIENGITTMIGGGSGPADGTHATTCTPGKFNIERMFQACEALPVNIGFFGKGNCSMLEPLKEQVVAGALGLKIHEDWGATPAVIDAALKVADEMDVQVAIHTDTLNESGFLEDTMKAINGRVIHTFHTEGAGGGHAPDIIKAAMYPNVLPASTNPTRPFTVNTIDEHLDMLMVCHHLDKRVPEDVAFADSRIRPETIAAEDILHDMGVFSIMSSDSQAMGRVGEVVTRTWQTADKMKAQRGALGDEGNDNFRIKRYIAKYTINPAIAHGISQYVGSLEVGKLADIVLWKPQFFGVKPEFVMKKGFISFAKMGDPNASIPTPQPVFYRPMFGANAKANTESAVYFVSQASVDANIKAQYGIQKETLAVKGCRDVGKKDLVHNNATPEITVDPERYEVRVDGEHITCEPATKVPLAQRYFLF</sequence>
<protein>
    <recommendedName>
        <fullName evidence="1">Urease subunit alpha</fullName>
        <ecNumber evidence="1">3.5.1.5</ecNumber>
    </recommendedName>
    <alternativeName>
        <fullName evidence="1">Urea amidohydrolase subunit alpha</fullName>
    </alternativeName>
</protein>
<accession>B0BRU2</accession>
<gene>
    <name evidence="1" type="primary">ureC</name>
    <name type="ordered locus">APJL_1649</name>
</gene>
<evidence type="ECO:0000255" key="1">
    <source>
        <dbReference type="HAMAP-Rule" id="MF_01953"/>
    </source>
</evidence>
<organism>
    <name type="scientific">Actinobacillus pleuropneumoniae serotype 3 (strain JL03)</name>
    <dbReference type="NCBI Taxonomy" id="434271"/>
    <lineage>
        <taxon>Bacteria</taxon>
        <taxon>Pseudomonadati</taxon>
        <taxon>Pseudomonadota</taxon>
        <taxon>Gammaproteobacteria</taxon>
        <taxon>Pasteurellales</taxon>
        <taxon>Pasteurellaceae</taxon>
        <taxon>Actinobacillus</taxon>
    </lineage>
</organism>
<keyword id="KW-0963">Cytoplasm</keyword>
<keyword id="KW-0378">Hydrolase</keyword>
<keyword id="KW-0479">Metal-binding</keyword>
<keyword id="KW-0533">Nickel</keyword>
<proteinExistence type="inferred from homology"/>